<protein>
    <recommendedName>
        <fullName evidence="1">Glutamate--tRNA ligase</fullName>
        <ecNumber evidence="1">6.1.1.17</ecNumber>
    </recommendedName>
    <alternativeName>
        <fullName evidence="1">Glutamyl-tRNA synthetase</fullName>
        <shortName evidence="1">GluRS</shortName>
    </alternativeName>
</protein>
<organism>
    <name type="scientific">Mycobacterium tuberculosis (strain ATCC 25618 / H37Rv)</name>
    <dbReference type="NCBI Taxonomy" id="83332"/>
    <lineage>
        <taxon>Bacteria</taxon>
        <taxon>Bacillati</taxon>
        <taxon>Actinomycetota</taxon>
        <taxon>Actinomycetes</taxon>
        <taxon>Mycobacteriales</taxon>
        <taxon>Mycobacteriaceae</taxon>
        <taxon>Mycobacterium</taxon>
        <taxon>Mycobacterium tuberculosis complex</taxon>
    </lineage>
</organism>
<accession>P9WFV9</accession>
<accession>L0TE59</accession>
<accession>O53241</accession>
<accession>P0A636</accession>
<proteinExistence type="evidence at protein level"/>
<feature type="chain" id="PRO_0000119610" description="Glutamate--tRNA ligase">
    <location>
        <begin position="1"/>
        <end position="490"/>
    </location>
</feature>
<feature type="short sequence motif" description="'HIGH' region" evidence="1">
    <location>
        <begin position="13"/>
        <end position="23"/>
    </location>
</feature>
<feature type="short sequence motif" description="'KMSKS' region" evidence="1">
    <location>
        <begin position="257"/>
        <end position="261"/>
    </location>
</feature>
<feature type="binding site" evidence="1">
    <location>
        <position position="260"/>
    </location>
    <ligand>
        <name>ATP</name>
        <dbReference type="ChEBI" id="CHEBI:30616"/>
    </ligand>
</feature>
<feature type="strand" evidence="2">
    <location>
        <begin position="8"/>
        <end position="11"/>
    </location>
</feature>
<feature type="strand" evidence="2">
    <location>
        <begin position="15"/>
        <end position="18"/>
    </location>
</feature>
<feature type="helix" evidence="2">
    <location>
        <begin position="21"/>
        <end position="37"/>
    </location>
</feature>
<feature type="strand" evidence="2">
    <location>
        <begin position="40"/>
        <end position="43"/>
    </location>
</feature>
<feature type="turn" evidence="2">
    <location>
        <begin position="50"/>
        <end position="52"/>
    </location>
</feature>
<feature type="helix" evidence="2">
    <location>
        <begin position="55"/>
        <end position="68"/>
    </location>
</feature>
<feature type="strand" evidence="2">
    <location>
        <begin position="73"/>
        <end position="75"/>
    </location>
</feature>
<feature type="turn" evidence="2">
    <location>
        <begin position="76"/>
        <end position="78"/>
    </location>
</feature>
<feature type="helix" evidence="2">
    <location>
        <begin position="87"/>
        <end position="89"/>
    </location>
</feature>
<feature type="helix" evidence="2">
    <location>
        <begin position="91"/>
        <end position="103"/>
    </location>
</feature>
<feature type="strand" evidence="2">
    <location>
        <begin position="106"/>
        <end position="110"/>
    </location>
</feature>
<feature type="helix" evidence="2">
    <location>
        <begin position="114"/>
        <end position="123"/>
    </location>
</feature>
<feature type="helix" evidence="2">
    <location>
        <begin position="135"/>
        <end position="138"/>
    </location>
</feature>
<feature type="helix" evidence="2">
    <location>
        <begin position="141"/>
        <end position="149"/>
    </location>
</feature>
<feature type="strand" evidence="2">
    <location>
        <begin position="155"/>
        <end position="158"/>
    </location>
</feature>
<feature type="strand" evidence="2">
    <location>
        <begin position="165"/>
        <end position="169"/>
    </location>
</feature>
<feature type="turn" evidence="2">
    <location>
        <begin position="170"/>
        <end position="172"/>
    </location>
</feature>
<feature type="strand" evidence="2">
    <location>
        <begin position="173"/>
        <end position="177"/>
    </location>
</feature>
<feature type="strand" evidence="2">
    <location>
        <begin position="186"/>
        <end position="188"/>
    </location>
</feature>
<feature type="helix" evidence="2">
    <location>
        <begin position="196"/>
        <end position="206"/>
    </location>
</feature>
<feature type="strand" evidence="2">
    <location>
        <begin position="211"/>
        <end position="215"/>
    </location>
</feature>
<feature type="helix" evidence="2">
    <location>
        <begin position="216"/>
        <end position="221"/>
    </location>
</feature>
<feature type="helix" evidence="2">
    <location>
        <begin position="222"/>
        <end position="234"/>
    </location>
</feature>
<feature type="strand" evidence="2">
    <location>
        <begin position="243"/>
        <end position="247"/>
    </location>
</feature>
<feature type="strand" evidence="2">
    <location>
        <begin position="253"/>
        <end position="257"/>
    </location>
</feature>
<feature type="strand" evidence="4">
    <location>
        <begin position="260"/>
        <end position="262"/>
    </location>
</feature>
<feature type="helix" evidence="2">
    <location>
        <begin position="263"/>
        <end position="265"/>
    </location>
</feature>
<feature type="helix" evidence="2">
    <location>
        <begin position="267"/>
        <end position="273"/>
    </location>
</feature>
<feature type="helix" evidence="2">
    <location>
        <begin position="277"/>
        <end position="285"/>
    </location>
</feature>
<feature type="helix" evidence="2">
    <location>
        <begin position="300"/>
        <end position="306"/>
    </location>
</feature>
<feature type="helix" evidence="2">
    <location>
        <begin position="309"/>
        <end position="311"/>
    </location>
</feature>
<feature type="helix" evidence="2">
    <location>
        <begin position="321"/>
        <end position="334"/>
    </location>
</feature>
<feature type="helix" evidence="2">
    <location>
        <begin position="337"/>
        <end position="350"/>
    </location>
</feature>
<feature type="helix" evidence="2">
    <location>
        <begin position="359"/>
        <end position="369"/>
    </location>
</feature>
<feature type="turn" evidence="3">
    <location>
        <begin position="370"/>
        <end position="372"/>
    </location>
</feature>
<feature type="helix" evidence="2">
    <location>
        <begin position="376"/>
        <end position="378"/>
    </location>
</feature>
<feature type="helix" evidence="2">
    <location>
        <begin position="379"/>
        <end position="383"/>
    </location>
</feature>
<feature type="helix" evidence="2">
    <location>
        <begin position="384"/>
        <end position="386"/>
    </location>
</feature>
<feature type="turn" evidence="2">
    <location>
        <begin position="388"/>
        <end position="390"/>
    </location>
</feature>
<feature type="helix" evidence="2">
    <location>
        <begin position="395"/>
        <end position="401"/>
    </location>
</feature>
<feature type="helix" evidence="2">
    <location>
        <begin position="404"/>
        <end position="418"/>
    </location>
</feature>
<feature type="helix" evidence="2">
    <location>
        <begin position="425"/>
        <end position="436"/>
    </location>
</feature>
<feature type="turn" evidence="2">
    <location>
        <begin position="437"/>
        <end position="440"/>
    </location>
</feature>
<feature type="helix" evidence="2">
    <location>
        <begin position="444"/>
        <end position="456"/>
    </location>
</feature>
<feature type="strand" evidence="2">
    <location>
        <begin position="457"/>
        <end position="460"/>
    </location>
</feature>
<feature type="helix" evidence="2">
    <location>
        <begin position="464"/>
        <end position="471"/>
    </location>
</feature>
<feature type="helix" evidence="2">
    <location>
        <begin position="473"/>
        <end position="483"/>
    </location>
</feature>
<gene>
    <name evidence="1" type="primary">gltX</name>
    <name type="synonym">gltS</name>
    <name type="ordered locus">Rv2992c</name>
    <name type="ORF">MTV012.06c</name>
</gene>
<name>SYE_MYCTU</name>
<dbReference type="EC" id="6.1.1.17" evidence="1"/>
<dbReference type="EMBL" id="AL123456">
    <property type="protein sequence ID" value="CCP45797.1"/>
    <property type="molecule type" value="Genomic_DNA"/>
</dbReference>
<dbReference type="PIR" id="C70854">
    <property type="entry name" value="C70854"/>
</dbReference>
<dbReference type="RefSeq" id="WP_003415122.1">
    <property type="nucleotide sequence ID" value="NZ_NVQJ01000041.1"/>
</dbReference>
<dbReference type="RefSeq" id="YP_177915.1">
    <property type="nucleotide sequence ID" value="NC_000962.3"/>
</dbReference>
<dbReference type="PDB" id="2JA2">
    <property type="method" value="X-ray"/>
    <property type="resolution" value="1.65 A"/>
    <property type="chains" value="A=1-490"/>
</dbReference>
<dbReference type="PDB" id="3PNV">
    <property type="method" value="X-ray"/>
    <property type="resolution" value="1.95 A"/>
    <property type="chains" value="A/B=1-490"/>
</dbReference>
<dbReference type="PDB" id="3PNY">
    <property type="method" value="X-ray"/>
    <property type="resolution" value="1.70 A"/>
    <property type="chains" value="A/B=1-490"/>
</dbReference>
<dbReference type="PDBsum" id="2JA2"/>
<dbReference type="PDBsum" id="3PNV"/>
<dbReference type="PDBsum" id="3PNY"/>
<dbReference type="SASBDB" id="P9WFV9"/>
<dbReference type="SMR" id="P9WFV9"/>
<dbReference type="FunCoup" id="P9WFV9">
    <property type="interactions" value="490"/>
</dbReference>
<dbReference type="STRING" id="83332.Rv2992c"/>
<dbReference type="PaxDb" id="83332-Rv2992c"/>
<dbReference type="DNASU" id="887850"/>
<dbReference type="GeneID" id="887850"/>
<dbReference type="KEGG" id="mtu:Rv2992c"/>
<dbReference type="KEGG" id="mtv:RVBD_2992c"/>
<dbReference type="PATRIC" id="fig|83332.111.peg.3335"/>
<dbReference type="TubercuList" id="Rv2992c"/>
<dbReference type="eggNOG" id="COG0008">
    <property type="taxonomic scope" value="Bacteria"/>
</dbReference>
<dbReference type="InParanoid" id="P9WFV9"/>
<dbReference type="OrthoDB" id="9807503at2"/>
<dbReference type="PhylomeDB" id="P9WFV9"/>
<dbReference type="BRENDA" id="6.1.1.17">
    <property type="organism ID" value="3445"/>
</dbReference>
<dbReference type="EvolutionaryTrace" id="P9WFV9"/>
<dbReference type="Proteomes" id="UP000001584">
    <property type="component" value="Chromosome"/>
</dbReference>
<dbReference type="GO" id="GO:0005829">
    <property type="term" value="C:cytosol"/>
    <property type="evidence" value="ECO:0000318"/>
    <property type="project" value="GO_Central"/>
</dbReference>
<dbReference type="GO" id="GO:0005886">
    <property type="term" value="C:plasma membrane"/>
    <property type="evidence" value="ECO:0007005"/>
    <property type="project" value="MTBBASE"/>
</dbReference>
<dbReference type="GO" id="GO:0005524">
    <property type="term" value="F:ATP binding"/>
    <property type="evidence" value="ECO:0007669"/>
    <property type="project" value="UniProtKB-UniRule"/>
</dbReference>
<dbReference type="GO" id="GO:0004818">
    <property type="term" value="F:glutamate-tRNA ligase activity"/>
    <property type="evidence" value="ECO:0000318"/>
    <property type="project" value="GO_Central"/>
</dbReference>
<dbReference type="GO" id="GO:0000049">
    <property type="term" value="F:tRNA binding"/>
    <property type="evidence" value="ECO:0007669"/>
    <property type="project" value="InterPro"/>
</dbReference>
<dbReference type="GO" id="GO:0008270">
    <property type="term" value="F:zinc ion binding"/>
    <property type="evidence" value="ECO:0007669"/>
    <property type="project" value="InterPro"/>
</dbReference>
<dbReference type="GO" id="GO:0006424">
    <property type="term" value="P:glutamyl-tRNA aminoacylation"/>
    <property type="evidence" value="ECO:0000318"/>
    <property type="project" value="GO_Central"/>
</dbReference>
<dbReference type="CDD" id="cd00808">
    <property type="entry name" value="GluRS_core"/>
    <property type="match status" value="1"/>
</dbReference>
<dbReference type="FunFam" id="3.40.50.620:FF:000149">
    <property type="entry name" value="Glutamate--tRNA ligase"/>
    <property type="match status" value="1"/>
</dbReference>
<dbReference type="FunFam" id="3.90.800.10:FF:000003">
    <property type="entry name" value="Glutamate--tRNA ligase"/>
    <property type="match status" value="1"/>
</dbReference>
<dbReference type="Gene3D" id="1.10.10.350">
    <property type="match status" value="1"/>
</dbReference>
<dbReference type="Gene3D" id="1.10.8.70">
    <property type="entry name" value="Glutamate-tRNA synthetase, class I, anticodon-binding domain 1"/>
    <property type="match status" value="1"/>
</dbReference>
<dbReference type="Gene3D" id="1.10.1160.10">
    <property type="entry name" value="Glutamyl-trna Synthetase, Domain 2"/>
    <property type="match status" value="1"/>
</dbReference>
<dbReference type="Gene3D" id="3.90.800.10">
    <property type="entry name" value="Glutamyl-tRNA Synthetase, Domain 3"/>
    <property type="match status" value="1"/>
</dbReference>
<dbReference type="Gene3D" id="3.40.50.620">
    <property type="entry name" value="HUPs"/>
    <property type="match status" value="1"/>
</dbReference>
<dbReference type="HAMAP" id="MF_00022">
    <property type="entry name" value="Glu_tRNA_synth_type1"/>
    <property type="match status" value="1"/>
</dbReference>
<dbReference type="InterPro" id="IPR045462">
    <property type="entry name" value="aa-tRNA-synth_I_cd-bd"/>
</dbReference>
<dbReference type="InterPro" id="IPR020751">
    <property type="entry name" value="aa-tRNA-synth_I_codon-bd_sub2"/>
</dbReference>
<dbReference type="InterPro" id="IPR008925">
    <property type="entry name" value="aa_tRNA-synth_I_cd-bd_sf"/>
</dbReference>
<dbReference type="InterPro" id="IPR004527">
    <property type="entry name" value="Glu-tRNA-ligase_bac/mito"/>
</dbReference>
<dbReference type="InterPro" id="IPR020752">
    <property type="entry name" value="Glu-tRNA-synth_I_codon-bd_sub1"/>
</dbReference>
<dbReference type="InterPro" id="IPR000924">
    <property type="entry name" value="Glu/Gln-tRNA-synth"/>
</dbReference>
<dbReference type="InterPro" id="IPR020058">
    <property type="entry name" value="Glu/Gln-tRNA-synth_Ib_cat-dom"/>
</dbReference>
<dbReference type="InterPro" id="IPR020061">
    <property type="entry name" value="Glu_tRNA_lig_a-bdl"/>
</dbReference>
<dbReference type="InterPro" id="IPR049940">
    <property type="entry name" value="GluQ/Sye"/>
</dbReference>
<dbReference type="InterPro" id="IPR033910">
    <property type="entry name" value="GluRS_core"/>
</dbReference>
<dbReference type="InterPro" id="IPR014729">
    <property type="entry name" value="Rossmann-like_a/b/a_fold"/>
</dbReference>
<dbReference type="NCBIfam" id="TIGR00464">
    <property type="entry name" value="gltX_bact"/>
    <property type="match status" value="1"/>
</dbReference>
<dbReference type="PANTHER" id="PTHR43311">
    <property type="entry name" value="GLUTAMATE--TRNA LIGASE"/>
    <property type="match status" value="1"/>
</dbReference>
<dbReference type="PANTHER" id="PTHR43311:SF2">
    <property type="entry name" value="GLUTAMATE--TRNA LIGASE, MITOCHONDRIAL-RELATED"/>
    <property type="match status" value="1"/>
</dbReference>
<dbReference type="Pfam" id="PF19269">
    <property type="entry name" value="Anticodon_2"/>
    <property type="match status" value="1"/>
</dbReference>
<dbReference type="Pfam" id="PF00749">
    <property type="entry name" value="tRNA-synt_1c"/>
    <property type="match status" value="1"/>
</dbReference>
<dbReference type="PRINTS" id="PR00987">
    <property type="entry name" value="TRNASYNTHGLU"/>
</dbReference>
<dbReference type="SUPFAM" id="SSF48163">
    <property type="entry name" value="An anticodon-binding domain of class I aminoacyl-tRNA synthetases"/>
    <property type="match status" value="1"/>
</dbReference>
<dbReference type="SUPFAM" id="SSF52374">
    <property type="entry name" value="Nucleotidylyl transferase"/>
    <property type="match status" value="1"/>
</dbReference>
<comment type="function">
    <text evidence="1">Catalyzes the attachment of glutamate to tRNA(Glu) in a two-step reaction: glutamate is first activated by ATP to form Glu-AMP and then transferred to the acceptor end of tRNA(Glu).</text>
</comment>
<comment type="catalytic activity">
    <reaction evidence="1">
        <text>tRNA(Glu) + L-glutamate + ATP = L-glutamyl-tRNA(Glu) + AMP + diphosphate</text>
        <dbReference type="Rhea" id="RHEA:23540"/>
        <dbReference type="Rhea" id="RHEA-COMP:9663"/>
        <dbReference type="Rhea" id="RHEA-COMP:9680"/>
        <dbReference type="ChEBI" id="CHEBI:29985"/>
        <dbReference type="ChEBI" id="CHEBI:30616"/>
        <dbReference type="ChEBI" id="CHEBI:33019"/>
        <dbReference type="ChEBI" id="CHEBI:78442"/>
        <dbReference type="ChEBI" id="CHEBI:78520"/>
        <dbReference type="ChEBI" id="CHEBI:456215"/>
        <dbReference type="EC" id="6.1.1.17"/>
    </reaction>
</comment>
<comment type="subunit">
    <text evidence="1">Monomer.</text>
</comment>
<comment type="subcellular location">
    <subcellularLocation>
        <location evidence="1">Cytoplasm</location>
    </subcellularLocation>
</comment>
<comment type="miscellaneous">
    <text>Was identified as a high-confidence drug target.</text>
</comment>
<comment type="similarity">
    <text evidence="1">Belongs to the class-I aminoacyl-tRNA synthetase family. Glutamate--tRNA ligase type 1 subfamily.</text>
</comment>
<sequence length="490" mass="53864">MTATETVRVRFCPSPTGTPHVGLVRTALFNWAYARHTGGTFVFRIEDTDAQRDSEESYLALLDALRWLGLDWDEGPEVGGPYGPYRQSQRAEIYRDVLARLLAAGEAYHAFSTPEEVEARHVAAGRNPKLGYDNFDRHLTDAQRAAYLAEGRQPVVRLRMPDDDLAWNDLVRGPVTFAAGSVPDFALTRASGDPLYTLVNPCDDALMKITHVLRGEDLLPSTPRQLALHQALIRIGVAERIPKFAHLPTVLGEGTKKLSKRDPQSNLFAHRDRGFIPEGLLNYLALLGWSIADDHDLFGLDEMVAAFDVADVNSSPARFDQKKADALNAEHIRMLDVGDFTVRLRDHLDTHGHHIALDEAAFAAAAELVQTRIVVLGDAWELLKFFNDDQYVIDPKAAAKELGPDGAAVLDAALAALTSVTDWTAPLIEAALKDALIEGLALKPRKAFSPIRVAATGTTVSPPLFESLELLGRDRSMQRLRAARQLVGHA</sequence>
<reference key="1">
    <citation type="journal article" date="1998" name="Nature">
        <title>Deciphering the biology of Mycobacterium tuberculosis from the complete genome sequence.</title>
        <authorList>
            <person name="Cole S.T."/>
            <person name="Brosch R."/>
            <person name="Parkhill J."/>
            <person name="Garnier T."/>
            <person name="Churcher C.M."/>
            <person name="Harris D.E."/>
            <person name="Gordon S.V."/>
            <person name="Eiglmeier K."/>
            <person name="Gas S."/>
            <person name="Barry C.E. III"/>
            <person name="Tekaia F."/>
            <person name="Badcock K."/>
            <person name="Basham D."/>
            <person name="Brown D."/>
            <person name="Chillingworth T."/>
            <person name="Connor R."/>
            <person name="Davies R.M."/>
            <person name="Devlin K."/>
            <person name="Feltwell T."/>
            <person name="Gentles S."/>
            <person name="Hamlin N."/>
            <person name="Holroyd S."/>
            <person name="Hornsby T."/>
            <person name="Jagels K."/>
            <person name="Krogh A."/>
            <person name="McLean J."/>
            <person name="Moule S."/>
            <person name="Murphy L.D."/>
            <person name="Oliver S."/>
            <person name="Osborne J."/>
            <person name="Quail M.A."/>
            <person name="Rajandream M.A."/>
            <person name="Rogers J."/>
            <person name="Rutter S."/>
            <person name="Seeger K."/>
            <person name="Skelton S."/>
            <person name="Squares S."/>
            <person name="Squares R."/>
            <person name="Sulston J.E."/>
            <person name="Taylor K."/>
            <person name="Whitehead S."/>
            <person name="Barrell B.G."/>
        </authorList>
    </citation>
    <scope>NUCLEOTIDE SEQUENCE [LARGE SCALE GENOMIC DNA]</scope>
    <source>
        <strain>ATCC 25618 / H37Rv</strain>
    </source>
</reference>
<reference key="2">
    <citation type="journal article" date="2008" name="BMC Syst. Biol.">
        <title>targetTB: a target identification pipeline for Mycobacterium tuberculosis through an interactome, reactome and genome-scale structural analysis.</title>
        <authorList>
            <person name="Raman K."/>
            <person name="Yeturu K."/>
            <person name="Chandra N."/>
        </authorList>
    </citation>
    <scope>IDENTIFICATION AS A DRUG TARGET [LARGE SCALE ANALYSIS]</scope>
</reference>
<reference key="3">
    <citation type="journal article" date="2011" name="Mol. Cell. Proteomics">
        <title>Proteogenomic analysis of Mycobacterium tuberculosis by high resolution mass spectrometry.</title>
        <authorList>
            <person name="Kelkar D.S."/>
            <person name="Kumar D."/>
            <person name="Kumar P."/>
            <person name="Balakrishnan L."/>
            <person name="Muthusamy B."/>
            <person name="Yadav A.K."/>
            <person name="Shrivastava P."/>
            <person name="Marimuthu A."/>
            <person name="Anand S."/>
            <person name="Sundaram H."/>
            <person name="Kingsbury R."/>
            <person name="Harsha H.C."/>
            <person name="Nair B."/>
            <person name="Prasad T.S."/>
            <person name="Chauhan D.S."/>
            <person name="Katoch K."/>
            <person name="Katoch V.M."/>
            <person name="Kumar P."/>
            <person name="Chaerkady R."/>
            <person name="Ramachandran S."/>
            <person name="Dash D."/>
            <person name="Pandey A."/>
        </authorList>
    </citation>
    <scope>IDENTIFICATION BY MASS SPECTROMETRY [LARGE SCALE ANALYSIS]</scope>
    <source>
        <strain>ATCC 25618 / H37Rv</strain>
    </source>
</reference>
<evidence type="ECO:0000255" key="1">
    <source>
        <dbReference type="HAMAP-Rule" id="MF_00022"/>
    </source>
</evidence>
<evidence type="ECO:0007829" key="2">
    <source>
        <dbReference type="PDB" id="2JA2"/>
    </source>
</evidence>
<evidence type="ECO:0007829" key="3">
    <source>
        <dbReference type="PDB" id="3PNV"/>
    </source>
</evidence>
<evidence type="ECO:0007829" key="4">
    <source>
        <dbReference type="PDB" id="3PNY"/>
    </source>
</evidence>
<keyword id="KW-0002">3D-structure</keyword>
<keyword id="KW-0030">Aminoacyl-tRNA synthetase</keyword>
<keyword id="KW-0067">ATP-binding</keyword>
<keyword id="KW-0963">Cytoplasm</keyword>
<keyword id="KW-0436">Ligase</keyword>
<keyword id="KW-0547">Nucleotide-binding</keyword>
<keyword id="KW-0648">Protein biosynthesis</keyword>
<keyword id="KW-1185">Reference proteome</keyword>